<geneLocation type="chloroplast"/>
<name>RBS_THANO</name>
<reference key="1">
    <citation type="submission" date="1998-09" db="EMBL/GenBank/DDBJ databases">
        <title>Structure and function study of ribulose-1,5-bisphosphate carboxylase/oxygenase of the marine diatom, Thalassiosira nordenskioeldii.</title>
        <authorList>
            <person name="Tomizawa K."/>
        </authorList>
    </citation>
    <scope>NUCLEOTIDE SEQUENCE [GENOMIC DNA]</scope>
</reference>
<evidence type="ECO:0000255" key="1">
    <source>
        <dbReference type="HAMAP-Rule" id="MF_00859"/>
    </source>
</evidence>
<protein>
    <recommendedName>
        <fullName evidence="1">Ribulose bisphosphate carboxylase small subunit</fullName>
        <shortName evidence="1">RuBisCO small subunit</shortName>
    </recommendedName>
</protein>
<keyword id="KW-0113">Calvin cycle</keyword>
<keyword id="KW-0120">Carbon dioxide fixation</keyword>
<keyword id="KW-0150">Chloroplast</keyword>
<keyword id="KW-0601">Photorespiration</keyword>
<keyword id="KW-0602">Photosynthesis</keyword>
<keyword id="KW-0934">Plastid</keyword>
<organism>
    <name type="scientific">Thalassiosira nordenskioeldii</name>
    <name type="common">Marine diatom</name>
    <dbReference type="NCBI Taxonomy" id="83372"/>
    <lineage>
        <taxon>Eukaryota</taxon>
        <taxon>Sar</taxon>
        <taxon>Stramenopiles</taxon>
        <taxon>Ochrophyta</taxon>
        <taxon>Bacillariophyta</taxon>
        <taxon>Coscinodiscophyceae</taxon>
        <taxon>Thalassiosirophycidae</taxon>
        <taxon>Thalassiosirales</taxon>
        <taxon>Thalassiosiraceae</taxon>
        <taxon>Thalassiosira</taxon>
    </lineage>
</organism>
<feature type="chain" id="PRO_0000198606" description="Ribulose bisphosphate carboxylase small subunit">
    <location>
        <begin position="1"/>
        <end position="139"/>
    </location>
</feature>
<dbReference type="EMBL" id="AB018007">
    <property type="protein sequence ID" value="BAA75795.1"/>
    <property type="molecule type" value="Genomic_DNA"/>
</dbReference>
<dbReference type="SMR" id="O98948"/>
<dbReference type="GO" id="GO:0009507">
    <property type="term" value="C:chloroplast"/>
    <property type="evidence" value="ECO:0007669"/>
    <property type="project" value="UniProtKB-SubCell"/>
</dbReference>
<dbReference type="GO" id="GO:0016984">
    <property type="term" value="F:ribulose-bisphosphate carboxylase activity"/>
    <property type="evidence" value="ECO:0007669"/>
    <property type="project" value="UniProtKB-UniRule"/>
</dbReference>
<dbReference type="GO" id="GO:0019253">
    <property type="term" value="P:reductive pentose-phosphate cycle"/>
    <property type="evidence" value="ECO:0007669"/>
    <property type="project" value="UniProtKB-UniRule"/>
</dbReference>
<dbReference type="CDD" id="cd03527">
    <property type="entry name" value="RuBisCO_small"/>
    <property type="match status" value="1"/>
</dbReference>
<dbReference type="Gene3D" id="3.30.190.10">
    <property type="entry name" value="Ribulose bisphosphate carboxylase, small subunit"/>
    <property type="match status" value="1"/>
</dbReference>
<dbReference type="HAMAP" id="MF_00859">
    <property type="entry name" value="RuBisCO_S_bact"/>
    <property type="match status" value="1"/>
</dbReference>
<dbReference type="InterPro" id="IPR024681">
    <property type="entry name" value="RuBisCO_ssu"/>
</dbReference>
<dbReference type="InterPro" id="IPR000894">
    <property type="entry name" value="RuBisCO_ssu_dom"/>
</dbReference>
<dbReference type="InterPro" id="IPR036385">
    <property type="entry name" value="RuBisCO_ssu_sf"/>
</dbReference>
<dbReference type="PANTHER" id="PTHR31262">
    <property type="entry name" value="RIBULOSE BISPHOSPHATE CARBOXYLASE SMALL CHAIN 1, CHLOROPLASTIC"/>
    <property type="match status" value="1"/>
</dbReference>
<dbReference type="PANTHER" id="PTHR31262:SF23">
    <property type="entry name" value="RIBULOSE BISPHOSPHATE CARBOXYLASE SMALL SUBUNIT"/>
    <property type="match status" value="1"/>
</dbReference>
<dbReference type="Pfam" id="PF00101">
    <property type="entry name" value="RuBisCO_small"/>
    <property type="match status" value="1"/>
</dbReference>
<dbReference type="SMART" id="SM00961">
    <property type="entry name" value="RuBisCO_small"/>
    <property type="match status" value="1"/>
</dbReference>
<dbReference type="SUPFAM" id="SSF55239">
    <property type="entry name" value="RuBisCO, small subunit"/>
    <property type="match status" value="1"/>
</dbReference>
<proteinExistence type="inferred from homology"/>
<sequence>MRLTQGCFSFLPDLTDTQIEKQVAYAMNKGWAMNVEWTDDPHPRNNYWELWGLPLFDIKDPATVMFELNEARKSCASGYIRINAFDASYGVESCVMSFITNRPATEPGFYLDRTEGPGRQVIYSIKSYSVQANPEGSRY</sequence>
<accession>O98948</accession>
<gene>
    <name evidence="1" type="primary">rbcS</name>
</gene>
<comment type="function">
    <text evidence="1">RuBisCO catalyzes two reactions: the carboxylation of D-ribulose 1,5-bisphosphate, the primary event in carbon dioxide fixation, as well as the oxidative fragmentation of the pentose substrate in the photorespiration process. Both reactions occur simultaneously and in competition at the same active site. Although the small subunit is not catalytic it is essential for maximal activity.</text>
</comment>
<comment type="subunit">
    <text evidence="1">Heterohexadecamer of 8 large and 8 small subunits.</text>
</comment>
<comment type="subcellular location">
    <subcellularLocation>
        <location evidence="1">Plastid</location>
        <location evidence="1">Chloroplast</location>
    </subcellularLocation>
</comment>
<comment type="miscellaneous">
    <text>In this alga, in contrast to plants, the small subunit is encoded in the chloroplast.</text>
</comment>
<comment type="miscellaneous">
    <text evidence="1">The basic functional RuBisCO is composed of a large chain homodimer in a 'head-to-tail' conformation. In form I RuBisCO this homodimer is arranged in a barrel-like tetramer with the small subunits forming a tetrameric 'cap' on each end of the 'barrel'.</text>
</comment>
<comment type="similarity">
    <text evidence="1">Belongs to the RuBisCO small chain family.</text>
</comment>